<reference key="1">
    <citation type="journal article" date="2002" name="Proc. Natl. Acad. Sci. U.S.A.">
        <title>Genome sequence of a serotype M3 strain of group A Streptococcus: phage-encoded toxins, the high-virulence phenotype, and clone emergence.</title>
        <authorList>
            <person name="Beres S.B."/>
            <person name="Sylva G.L."/>
            <person name="Barbian K.D."/>
            <person name="Lei B."/>
            <person name="Hoff J.S."/>
            <person name="Mammarella N.D."/>
            <person name="Liu M.-Y."/>
            <person name="Smoot J.C."/>
            <person name="Porcella S.F."/>
            <person name="Parkins L.D."/>
            <person name="Campbell D.S."/>
            <person name="Smith T.M."/>
            <person name="McCormick J.K."/>
            <person name="Leung D.Y.M."/>
            <person name="Schlievert P.M."/>
            <person name="Musser J.M."/>
        </authorList>
    </citation>
    <scope>NUCLEOTIDE SEQUENCE [LARGE SCALE GENOMIC DNA]</scope>
    <source>
        <strain>ATCC BAA-595 / MGAS315</strain>
    </source>
</reference>
<name>SYGB_STRP3</name>
<evidence type="ECO:0000255" key="1">
    <source>
        <dbReference type="HAMAP-Rule" id="MF_00255"/>
    </source>
</evidence>
<evidence type="ECO:0000305" key="2"/>
<protein>
    <recommendedName>
        <fullName evidence="1">Glycine--tRNA ligase beta subunit</fullName>
        <ecNumber evidence="1">6.1.1.14</ecNumber>
    </recommendedName>
    <alternativeName>
        <fullName evidence="1">Glycyl-tRNA synthetase beta subunit</fullName>
        <shortName evidence="1">GlyRS</shortName>
    </alternativeName>
</protein>
<accession>P0DG38</accession>
<accession>Q879I0</accession>
<accession>Q8K663</accession>
<gene>
    <name evidence="1" type="primary">glyS</name>
    <name type="ordered locus">SpyM3_1471</name>
</gene>
<feature type="chain" id="PRO_0000072930" description="Glycine--tRNA ligase beta subunit">
    <location>
        <begin position="1"/>
        <end position="679"/>
    </location>
</feature>
<comment type="catalytic activity">
    <reaction evidence="1">
        <text>tRNA(Gly) + glycine + ATP = glycyl-tRNA(Gly) + AMP + diphosphate</text>
        <dbReference type="Rhea" id="RHEA:16013"/>
        <dbReference type="Rhea" id="RHEA-COMP:9664"/>
        <dbReference type="Rhea" id="RHEA-COMP:9683"/>
        <dbReference type="ChEBI" id="CHEBI:30616"/>
        <dbReference type="ChEBI" id="CHEBI:33019"/>
        <dbReference type="ChEBI" id="CHEBI:57305"/>
        <dbReference type="ChEBI" id="CHEBI:78442"/>
        <dbReference type="ChEBI" id="CHEBI:78522"/>
        <dbReference type="ChEBI" id="CHEBI:456215"/>
        <dbReference type="EC" id="6.1.1.14"/>
    </reaction>
</comment>
<comment type="subunit">
    <text evidence="1">Tetramer of two alpha and two beta subunits.</text>
</comment>
<comment type="subcellular location">
    <subcellularLocation>
        <location evidence="1">Cytoplasm</location>
    </subcellularLocation>
</comment>
<comment type="similarity">
    <text evidence="1">Belongs to the class-II aminoacyl-tRNA synthetase family.</text>
</comment>
<comment type="sequence caution" evidence="2">
    <conflict type="erroneous initiation">
        <sequence resource="EMBL-CDS" id="AAM80078"/>
    </conflict>
</comment>
<dbReference type="EC" id="6.1.1.14" evidence="1"/>
<dbReference type="EMBL" id="AE014074">
    <property type="protein sequence ID" value="AAM80078.1"/>
    <property type="status" value="ALT_INIT"/>
    <property type="molecule type" value="Genomic_DNA"/>
</dbReference>
<dbReference type="RefSeq" id="WP_011054911.1">
    <property type="nucleotide sequence ID" value="NC_004070.1"/>
</dbReference>
<dbReference type="SMR" id="P0DG38"/>
<dbReference type="KEGG" id="spg:SpyM3_1471"/>
<dbReference type="HOGENOM" id="CLU_007220_2_2_9"/>
<dbReference type="Proteomes" id="UP000000564">
    <property type="component" value="Chromosome"/>
</dbReference>
<dbReference type="GO" id="GO:0005829">
    <property type="term" value="C:cytosol"/>
    <property type="evidence" value="ECO:0007669"/>
    <property type="project" value="TreeGrafter"/>
</dbReference>
<dbReference type="GO" id="GO:0005524">
    <property type="term" value="F:ATP binding"/>
    <property type="evidence" value="ECO:0007669"/>
    <property type="project" value="UniProtKB-UniRule"/>
</dbReference>
<dbReference type="GO" id="GO:0004820">
    <property type="term" value="F:glycine-tRNA ligase activity"/>
    <property type="evidence" value="ECO:0007669"/>
    <property type="project" value="UniProtKB-UniRule"/>
</dbReference>
<dbReference type="GO" id="GO:0006426">
    <property type="term" value="P:glycyl-tRNA aminoacylation"/>
    <property type="evidence" value="ECO:0007669"/>
    <property type="project" value="UniProtKB-UniRule"/>
</dbReference>
<dbReference type="HAMAP" id="MF_00255">
    <property type="entry name" value="Gly_tRNA_synth_beta"/>
    <property type="match status" value="1"/>
</dbReference>
<dbReference type="InterPro" id="IPR015944">
    <property type="entry name" value="Gly-tRNA-synth_bsu"/>
</dbReference>
<dbReference type="InterPro" id="IPR006194">
    <property type="entry name" value="Gly-tRNA-synth_heterodimer"/>
</dbReference>
<dbReference type="NCBIfam" id="TIGR00211">
    <property type="entry name" value="glyS"/>
    <property type="match status" value="1"/>
</dbReference>
<dbReference type="PANTHER" id="PTHR30075:SF2">
    <property type="entry name" value="GLYCINE--TRNA LIGASE, CHLOROPLASTIC_MITOCHONDRIAL 2"/>
    <property type="match status" value="1"/>
</dbReference>
<dbReference type="PANTHER" id="PTHR30075">
    <property type="entry name" value="GLYCYL-TRNA SYNTHETASE"/>
    <property type="match status" value="1"/>
</dbReference>
<dbReference type="Pfam" id="PF02092">
    <property type="entry name" value="tRNA_synt_2f"/>
    <property type="match status" value="1"/>
</dbReference>
<dbReference type="PRINTS" id="PR01045">
    <property type="entry name" value="TRNASYNTHGB"/>
</dbReference>
<dbReference type="SUPFAM" id="SSF109604">
    <property type="entry name" value="HD-domain/PDEase-like"/>
    <property type="match status" value="1"/>
</dbReference>
<dbReference type="PROSITE" id="PS50861">
    <property type="entry name" value="AA_TRNA_LIGASE_II_GLYAB"/>
    <property type="match status" value="1"/>
</dbReference>
<proteinExistence type="inferred from homology"/>
<keyword id="KW-0030">Aminoacyl-tRNA synthetase</keyword>
<keyword id="KW-0067">ATP-binding</keyword>
<keyword id="KW-0963">Cytoplasm</keyword>
<keyword id="KW-0436">Ligase</keyword>
<keyword id="KW-0547">Nucleotide-binding</keyword>
<keyword id="KW-0648">Protein biosynthesis</keyword>
<sequence length="679" mass="74996">MSKNLLIELGLEELPAYVVTPSEKQLGERLATFLTENRLSFEDIQTFSTPRRLAVRVSGLAAQQTDLTEDFKGPAKKIALDADGNFSKAAQGFVRGKGLTTDAIEFREVKGEEYVYVTKHEAGKPAKEVLLGVTEVLSAMTFPVSMHWANNSFEYIRPVHTLTVLLNDEALELDFLDIHSGRVSRGHRFLGTETTITSADSYEADLRSQFVIADAKERQEMIVEQIKAIEAAQGVQVDIDADLLNEVLNLVEFPTAFMGSFDAKYLDVPEEVLVTSMKNHQRYFVVRDQEGHLMPNFVSVRNGNDQAIENVIKGNEKVLVARLEDGEFFWREDQKLQIADLVAKLTNVTFHEKIGSLAEHMDRTRVIAASLAKEANLSAEEVTAVDRAAQIYKFDLLTGMVGEFDELQGIMGEKYARLAGEDAAVATAIREHYLPDAAGGALPETKVGAVLALADKLDTLLSFFSVGLIPSGSNDPYALRRATQGIVRILDHFGWRIPMDKLVDSLYDLSFDSLTYANKADVMNFIRARVDKMMGKAVPKDIREAVLESSTFVVPEMLAAAEALVKASHTENYKPAVESLSRAFNLAEKADASVHVDPSLFENEQENTLFAAIQGLTLAGSAAQQLEQVFVLSPVINDFFDNTMVMAEDQALKNNRLAILSDLVSKAKTIAAFNQLNTK</sequence>
<organism>
    <name type="scientific">Streptococcus pyogenes serotype M3 (strain ATCC BAA-595 / MGAS315)</name>
    <dbReference type="NCBI Taxonomy" id="198466"/>
    <lineage>
        <taxon>Bacteria</taxon>
        <taxon>Bacillati</taxon>
        <taxon>Bacillota</taxon>
        <taxon>Bacilli</taxon>
        <taxon>Lactobacillales</taxon>
        <taxon>Streptococcaceae</taxon>
        <taxon>Streptococcus</taxon>
    </lineage>
</organism>